<sequence length="262" mass="29641">MSGRIPNHGYMQPASISATSCGHDYQFPTLANSESDLLEEDAEEFELRPRGKEKTRRSTSKERIDDIVYISRDICEGDTLNSIALQYCCTVADLKRANNFLNEQDFFALRTIKIPVKRFSVLTQPHFSPKAKATRPGTLQLSPEHQESDLLIGPSSYETAGSFLQEVDRDIEKIVKSTDTKKESLNEVVSALSQEHFEPEQILVPQRDPYHGADWSLGWWTAVAIMVFVGIITPLFYFLYYEVLMKVNTSHTLNSIEKSGPS</sequence>
<keyword id="KW-1003">Cell membrane</keyword>
<keyword id="KW-0333">Golgi apparatus</keyword>
<keyword id="KW-0472">Membrane</keyword>
<keyword id="KW-1185">Reference proteome</keyword>
<keyword id="KW-0812">Transmembrane</keyword>
<keyword id="KW-1133">Transmembrane helix</keyword>
<protein>
    <recommendedName>
        <fullName>LysM and putative peptidoglycan-binding domain-containing protein 3</fullName>
    </recommendedName>
</protein>
<name>LYSM3_XENTR</name>
<reference key="1">
    <citation type="submission" date="2006-06" db="EMBL/GenBank/DDBJ databases">
        <authorList>
            <consortium name="Sanger Xenopus tropicalis EST/cDNA project"/>
        </authorList>
    </citation>
    <scope>NUCLEOTIDE SEQUENCE [LARGE SCALE MRNA]</scope>
    <source>
        <tissue>Egg</tissue>
    </source>
</reference>
<accession>Q28DG6</accession>
<evidence type="ECO:0000250" key="1">
    <source>
        <dbReference type="UniProtKB" id="Q7Z3D4"/>
    </source>
</evidence>
<evidence type="ECO:0000255" key="2"/>
<evidence type="ECO:0000255" key="3">
    <source>
        <dbReference type="PROSITE-ProRule" id="PRU01118"/>
    </source>
</evidence>
<organism>
    <name type="scientific">Xenopus tropicalis</name>
    <name type="common">Western clawed frog</name>
    <name type="synonym">Silurana tropicalis</name>
    <dbReference type="NCBI Taxonomy" id="8364"/>
    <lineage>
        <taxon>Eukaryota</taxon>
        <taxon>Metazoa</taxon>
        <taxon>Chordata</taxon>
        <taxon>Craniata</taxon>
        <taxon>Vertebrata</taxon>
        <taxon>Euteleostomi</taxon>
        <taxon>Amphibia</taxon>
        <taxon>Batrachia</taxon>
        <taxon>Anura</taxon>
        <taxon>Pipoidea</taxon>
        <taxon>Pipidae</taxon>
        <taxon>Xenopodinae</taxon>
        <taxon>Xenopus</taxon>
        <taxon>Silurana</taxon>
    </lineage>
</organism>
<comment type="function">
    <text evidence="1">Essential for Golgi structural integrity.</text>
</comment>
<comment type="subcellular location">
    <subcellularLocation>
        <location evidence="1">Cell membrane</location>
        <topology evidence="2">Single-pass membrane protein</topology>
    </subcellularLocation>
    <subcellularLocation>
        <location evidence="1">Golgi apparatus</location>
    </subcellularLocation>
</comment>
<proteinExistence type="evidence at transcript level"/>
<gene>
    <name type="primary">lysmd3</name>
    <name type="ORF">TEgg001d10.1</name>
</gene>
<dbReference type="EMBL" id="CR855525">
    <property type="protein sequence ID" value="CAJ81746.1"/>
    <property type="molecule type" value="mRNA"/>
</dbReference>
<dbReference type="RefSeq" id="NP_001017308.1">
    <property type="nucleotide sequence ID" value="NM_001017308.3"/>
</dbReference>
<dbReference type="SMR" id="Q28DG6"/>
<dbReference type="FunCoup" id="Q28DG6">
    <property type="interactions" value="1764"/>
</dbReference>
<dbReference type="STRING" id="8364.ENSXETP00000009252"/>
<dbReference type="PaxDb" id="8364-ENSXETP00000042475"/>
<dbReference type="GeneID" id="550062"/>
<dbReference type="KEGG" id="xtr:550062"/>
<dbReference type="AGR" id="Xenbase:XB-GENE-5775831"/>
<dbReference type="CTD" id="116068"/>
<dbReference type="Xenbase" id="XB-GENE-5775831">
    <property type="gene designation" value="lysmd3"/>
</dbReference>
<dbReference type="eggNOG" id="KOG2850">
    <property type="taxonomic scope" value="Eukaryota"/>
</dbReference>
<dbReference type="InParanoid" id="Q28DG6"/>
<dbReference type="OMA" id="IALQFCC"/>
<dbReference type="OrthoDB" id="538216at2759"/>
<dbReference type="Proteomes" id="UP000008143">
    <property type="component" value="Chromosome 1"/>
</dbReference>
<dbReference type="GO" id="GO:0005794">
    <property type="term" value="C:Golgi apparatus"/>
    <property type="evidence" value="ECO:0000250"/>
    <property type="project" value="UniProtKB"/>
</dbReference>
<dbReference type="GO" id="GO:0005886">
    <property type="term" value="C:plasma membrane"/>
    <property type="evidence" value="ECO:0000250"/>
    <property type="project" value="UniProtKB"/>
</dbReference>
<dbReference type="GO" id="GO:0007030">
    <property type="term" value="P:Golgi organization"/>
    <property type="evidence" value="ECO:0000250"/>
    <property type="project" value="UniProtKB"/>
</dbReference>
<dbReference type="CDD" id="cd00118">
    <property type="entry name" value="LysM"/>
    <property type="match status" value="1"/>
</dbReference>
<dbReference type="Gene3D" id="3.10.350.10">
    <property type="entry name" value="LysM domain"/>
    <property type="match status" value="1"/>
</dbReference>
<dbReference type="InterPro" id="IPR045030">
    <property type="entry name" value="LYSM1-4"/>
</dbReference>
<dbReference type="InterPro" id="IPR018392">
    <property type="entry name" value="LysM_dom"/>
</dbReference>
<dbReference type="InterPro" id="IPR036779">
    <property type="entry name" value="LysM_dom_sf"/>
</dbReference>
<dbReference type="PANTHER" id="PTHR20932:SF5">
    <property type="entry name" value="AND PUTATIVE PEPTIDOGLYCAN-BINDING DOMAIN-CONTAINING PROTEIN 3-RELATED"/>
    <property type="match status" value="1"/>
</dbReference>
<dbReference type="PANTHER" id="PTHR20932">
    <property type="entry name" value="LYSM AND PUTATIVE PEPTIDOGLYCAN-BINDING DOMAIN-CONTAINING PROTEIN"/>
    <property type="match status" value="1"/>
</dbReference>
<dbReference type="Pfam" id="PF01476">
    <property type="entry name" value="LysM"/>
    <property type="match status" value="1"/>
</dbReference>
<dbReference type="SMART" id="SM00257">
    <property type="entry name" value="LysM"/>
    <property type="match status" value="1"/>
</dbReference>
<dbReference type="PROSITE" id="PS51782">
    <property type="entry name" value="LYSM"/>
    <property type="match status" value="1"/>
</dbReference>
<feature type="chain" id="PRO_0000248012" description="LysM and putative peptidoglycan-binding domain-containing protein 3">
    <location>
        <begin position="1"/>
        <end position="262"/>
    </location>
</feature>
<feature type="topological domain" description="Extracellular" evidence="2">
    <location>
        <begin position="1"/>
        <end position="218"/>
    </location>
</feature>
<feature type="transmembrane region" description="Helical" evidence="2">
    <location>
        <begin position="219"/>
        <end position="239"/>
    </location>
</feature>
<feature type="topological domain" description="Cytoplasmic" evidence="2">
    <location>
        <begin position="240"/>
        <end position="262"/>
    </location>
</feature>
<feature type="domain" description="LysM" evidence="3">
    <location>
        <begin position="70"/>
        <end position="114"/>
    </location>
</feature>